<reference key="1">
    <citation type="journal article" date="2005" name="Proc. Natl. Acad. Sci. U.S.A.">
        <title>Comparison of the complete genome sequences of Pseudomonas syringae pv. syringae B728a and pv. tomato DC3000.</title>
        <authorList>
            <person name="Feil H."/>
            <person name="Feil W.S."/>
            <person name="Chain P."/>
            <person name="Larimer F."/>
            <person name="Dibartolo G."/>
            <person name="Copeland A."/>
            <person name="Lykidis A."/>
            <person name="Trong S."/>
            <person name="Nolan M."/>
            <person name="Goltsman E."/>
            <person name="Thiel J."/>
            <person name="Malfatti S."/>
            <person name="Loper J.E."/>
            <person name="Lapidus A."/>
            <person name="Detter J.C."/>
            <person name="Land M."/>
            <person name="Richardson P.M."/>
            <person name="Kyrpides N.C."/>
            <person name="Ivanova N."/>
            <person name="Lindow S.E."/>
        </authorList>
    </citation>
    <scope>NUCLEOTIDE SEQUENCE [LARGE SCALE GENOMIC DNA]</scope>
    <source>
        <strain>B728a</strain>
    </source>
</reference>
<dbReference type="EC" id="2.1.1.77" evidence="1"/>
<dbReference type="EMBL" id="CP000075">
    <property type="protein sequence ID" value="AAY36423.1"/>
    <property type="status" value="ALT_INIT"/>
    <property type="molecule type" value="Genomic_DNA"/>
</dbReference>
<dbReference type="RefSeq" id="YP_234461.1">
    <property type="nucleotide sequence ID" value="NC_007005.1"/>
</dbReference>
<dbReference type="SMR" id="Q4ZWP9"/>
<dbReference type="STRING" id="205918.Psyr_1372"/>
<dbReference type="KEGG" id="psb:Psyr_1372"/>
<dbReference type="PATRIC" id="fig|205918.7.peg.1405"/>
<dbReference type="eggNOG" id="COG2518">
    <property type="taxonomic scope" value="Bacteria"/>
</dbReference>
<dbReference type="HOGENOM" id="CLU_055432_2_0_6"/>
<dbReference type="OrthoDB" id="9810066at2"/>
<dbReference type="Proteomes" id="UP000000426">
    <property type="component" value="Chromosome"/>
</dbReference>
<dbReference type="GO" id="GO:0005737">
    <property type="term" value="C:cytoplasm"/>
    <property type="evidence" value="ECO:0007669"/>
    <property type="project" value="UniProtKB-SubCell"/>
</dbReference>
<dbReference type="GO" id="GO:0004719">
    <property type="term" value="F:protein-L-isoaspartate (D-aspartate) O-methyltransferase activity"/>
    <property type="evidence" value="ECO:0007669"/>
    <property type="project" value="UniProtKB-UniRule"/>
</dbReference>
<dbReference type="GO" id="GO:0032259">
    <property type="term" value="P:methylation"/>
    <property type="evidence" value="ECO:0007669"/>
    <property type="project" value="UniProtKB-KW"/>
</dbReference>
<dbReference type="GO" id="GO:0036211">
    <property type="term" value="P:protein modification process"/>
    <property type="evidence" value="ECO:0007669"/>
    <property type="project" value="UniProtKB-UniRule"/>
</dbReference>
<dbReference type="GO" id="GO:0030091">
    <property type="term" value="P:protein repair"/>
    <property type="evidence" value="ECO:0007669"/>
    <property type="project" value="UniProtKB-UniRule"/>
</dbReference>
<dbReference type="CDD" id="cd02440">
    <property type="entry name" value="AdoMet_MTases"/>
    <property type="match status" value="1"/>
</dbReference>
<dbReference type="FunFam" id="3.40.50.150:FF:000010">
    <property type="entry name" value="Protein-L-isoaspartate O-methyltransferase"/>
    <property type="match status" value="1"/>
</dbReference>
<dbReference type="Gene3D" id="3.40.50.150">
    <property type="entry name" value="Vaccinia Virus protein VP39"/>
    <property type="match status" value="1"/>
</dbReference>
<dbReference type="HAMAP" id="MF_00090">
    <property type="entry name" value="PIMT"/>
    <property type="match status" value="1"/>
</dbReference>
<dbReference type="InterPro" id="IPR000682">
    <property type="entry name" value="PCMT"/>
</dbReference>
<dbReference type="InterPro" id="IPR029063">
    <property type="entry name" value="SAM-dependent_MTases_sf"/>
</dbReference>
<dbReference type="NCBIfam" id="TIGR00080">
    <property type="entry name" value="pimt"/>
    <property type="match status" value="1"/>
</dbReference>
<dbReference type="NCBIfam" id="NF001453">
    <property type="entry name" value="PRK00312.1"/>
    <property type="match status" value="1"/>
</dbReference>
<dbReference type="PANTHER" id="PTHR11579">
    <property type="entry name" value="PROTEIN-L-ISOASPARTATE O-METHYLTRANSFERASE"/>
    <property type="match status" value="1"/>
</dbReference>
<dbReference type="PANTHER" id="PTHR11579:SF0">
    <property type="entry name" value="PROTEIN-L-ISOASPARTATE(D-ASPARTATE) O-METHYLTRANSFERASE"/>
    <property type="match status" value="1"/>
</dbReference>
<dbReference type="Pfam" id="PF01135">
    <property type="entry name" value="PCMT"/>
    <property type="match status" value="1"/>
</dbReference>
<dbReference type="SUPFAM" id="SSF53335">
    <property type="entry name" value="S-adenosyl-L-methionine-dependent methyltransferases"/>
    <property type="match status" value="1"/>
</dbReference>
<dbReference type="PROSITE" id="PS01279">
    <property type="entry name" value="PCMT"/>
    <property type="match status" value="1"/>
</dbReference>
<keyword id="KW-0963">Cytoplasm</keyword>
<keyword id="KW-0489">Methyltransferase</keyword>
<keyword id="KW-0949">S-adenosyl-L-methionine</keyword>
<keyword id="KW-0808">Transferase</keyword>
<name>PIMT_PSEU2</name>
<protein>
    <recommendedName>
        <fullName evidence="1">Protein-L-isoaspartate O-methyltransferase</fullName>
        <ecNumber evidence="1">2.1.1.77</ecNumber>
    </recommendedName>
    <alternativeName>
        <fullName evidence="1">L-isoaspartyl protein carboxyl methyltransferase</fullName>
    </alternativeName>
    <alternativeName>
        <fullName evidence="1">Protein L-isoaspartyl methyltransferase</fullName>
    </alternativeName>
    <alternativeName>
        <fullName evidence="1">Protein-beta-aspartate methyltransferase</fullName>
        <shortName evidence="1">PIMT</shortName>
    </alternativeName>
</protein>
<proteinExistence type="inferred from homology"/>
<accession>Q4ZWP9</accession>
<evidence type="ECO:0000255" key="1">
    <source>
        <dbReference type="HAMAP-Rule" id="MF_00090"/>
    </source>
</evidence>
<evidence type="ECO:0000305" key="2"/>
<organism>
    <name type="scientific">Pseudomonas syringae pv. syringae (strain B728a)</name>
    <dbReference type="NCBI Taxonomy" id="205918"/>
    <lineage>
        <taxon>Bacteria</taxon>
        <taxon>Pseudomonadati</taxon>
        <taxon>Pseudomonadota</taxon>
        <taxon>Gammaproteobacteria</taxon>
        <taxon>Pseudomonadales</taxon>
        <taxon>Pseudomonadaceae</taxon>
        <taxon>Pseudomonas</taxon>
        <taxon>Pseudomonas syringae</taxon>
    </lineage>
</organism>
<sequence length="211" mass="23423">MTSQRTRERLIQRLCEEGISNQRVLDVIRKTPRHLFVDEALAHRAYEDTALPIGHNQTISQPYMVARMSELLLAAGPLDKVMEIGTGSGYQTAVLAQLVERVFSVERIKGLQDRAKERLVELNLRNVVFRWGDGWEGWPALAPYNGIIVTAVATDVPQALLDQLAPGGRLVIPVGSGEVQQLMLIIREENGFSRHVLGAVRFVPLLNGPIA</sequence>
<comment type="function">
    <text evidence="1">Catalyzes the methyl esterification of L-isoaspartyl residues in peptides and proteins that result from spontaneous decomposition of normal L-aspartyl and L-asparaginyl residues. It plays a role in the repair and/or degradation of damaged proteins.</text>
</comment>
<comment type="catalytic activity">
    <reaction evidence="1">
        <text>[protein]-L-isoaspartate + S-adenosyl-L-methionine = [protein]-L-isoaspartate alpha-methyl ester + S-adenosyl-L-homocysteine</text>
        <dbReference type="Rhea" id="RHEA:12705"/>
        <dbReference type="Rhea" id="RHEA-COMP:12143"/>
        <dbReference type="Rhea" id="RHEA-COMP:12144"/>
        <dbReference type="ChEBI" id="CHEBI:57856"/>
        <dbReference type="ChEBI" id="CHEBI:59789"/>
        <dbReference type="ChEBI" id="CHEBI:90596"/>
        <dbReference type="ChEBI" id="CHEBI:90598"/>
        <dbReference type="EC" id="2.1.1.77"/>
    </reaction>
</comment>
<comment type="subcellular location">
    <subcellularLocation>
        <location evidence="1">Cytoplasm</location>
    </subcellularLocation>
</comment>
<comment type="similarity">
    <text evidence="1">Belongs to the methyltransferase superfamily. L-isoaspartyl/D-aspartyl protein methyltransferase family.</text>
</comment>
<comment type="sequence caution" evidence="2">
    <conflict type="erroneous initiation">
        <sequence resource="EMBL-CDS" id="AAY36423"/>
    </conflict>
</comment>
<gene>
    <name evidence="1" type="primary">pcm</name>
    <name type="ordered locus">Psyr_1372</name>
</gene>
<feature type="chain" id="PRO_0000351915" description="Protein-L-isoaspartate O-methyltransferase">
    <location>
        <begin position="1"/>
        <end position="211"/>
    </location>
</feature>
<feature type="active site" evidence="1">
    <location>
        <position position="60"/>
    </location>
</feature>